<protein>
    <recommendedName>
        <fullName>Vesicle-fusing ATPase 1</fullName>
        <ecNumber>3.6.4.6</ecNumber>
    </recommendedName>
    <alternativeName>
        <fullName>N-ethylmaleimide-sensitive fusion protein 1</fullName>
        <shortName>NEM-sensitive fusion protein 1</shortName>
    </alternativeName>
    <alternativeName>
        <fullName>Protein comatose</fullName>
    </alternativeName>
    <alternativeName>
        <fullName>Vesicular-fusion protein NSF1</fullName>
    </alternativeName>
    <alternativeName>
        <fullName>dNsf-1</fullName>
        <shortName>NSF-1</shortName>
    </alternativeName>
</protein>
<gene>
    <name type="primary">comt</name>
    <name type="synonym">Nsf</name>
    <name type="synonym">Nsf1</name>
    <name type="ORF">CG1618</name>
</gene>
<evidence type="ECO:0000250" key="1"/>
<evidence type="ECO:0000250" key="2">
    <source>
        <dbReference type="UniProtKB" id="P18708"/>
    </source>
</evidence>
<evidence type="ECO:0000305" key="3"/>
<name>NSF1_DROME</name>
<accession>P46461</accession>
<accession>Q9VYF4</accession>
<sequence>MAYILKATKCPTDELSLTNRAIVNVGDFPEEIKYADISPAPGQHFIFALEKTVEVPSGYVGFSLVQRKWAMVSINQELEVRPYRFDASSDVITCVSFETDFLQKKTVSQEPYDSDQMAKEFIMQFAGMALTVGQSLVFNFKDKKLLGLAVKSLEAIDPKSLGEGKDTAMRNVRFGRILGNTVVQFEKAENSSLNLQGKSKGKVVRQSIINPDWDFGKMGIGGLDKEFNSIFRRAFASRVFPPELVEQLGCKHVKGILLYGPPGTGKTLMARQIGTMLNAREPKIVNGPQILDKYVGESEANVRRLFAEAEEEEKRLGPNSGLHIIIFDEIDAICKQRGSVAGNSGVHDTVVNQLLTKIDGVDQLNNILVIGMTNRRDMIDEALLRPGRLEVQMEISLPNEQGRVQILNIHTKRMREFNKINDDVDNKEIAALTKNFSGAELEGLVRAAQSSAMNRLIKADAKVTVDPEAMEKLKVNRDDFLHSLEHDIKPAFGTAQEILDNMLARGVINWGAPVSNLLEDGMLYVQQAKAPESSGLVSVLVAGAPNSGKTALAAQLAKMSDFPFVKVCSPEDMVGYTESAKCLHIRKIFDDAYRSMLSCIVVDNVERLLDYGSIGPRYSNMTLQALLVLLKKQPPKGRKLLILCTSSRREVLEEMEMLTAFTSVLHVPNLSKPDHVLAVLENTDIFSKGEIQAIGKKMAGKRVFIGIKKLLGLIDMARQTEQSQRAIKFLSKMEEEGGLDMVARQ</sequence>
<proteinExistence type="evidence at transcript level"/>
<comment type="function">
    <text>Required for vesicle-mediated transport. Catalyzes the fusion of transport vesicles within the Golgi cisternae. Is also required for transport from the endoplasmic reticulum to the Golgi stack. Seems to function as a fusion protein required for the delivery of cargo proteins to all compartments of the Golgi stack independent of vesicle origin.</text>
</comment>
<comment type="catalytic activity">
    <reaction>
        <text>ATP + H2O = ADP + phosphate + H(+)</text>
        <dbReference type="Rhea" id="RHEA:13065"/>
        <dbReference type="ChEBI" id="CHEBI:15377"/>
        <dbReference type="ChEBI" id="CHEBI:15378"/>
        <dbReference type="ChEBI" id="CHEBI:30616"/>
        <dbReference type="ChEBI" id="CHEBI:43474"/>
        <dbReference type="ChEBI" id="CHEBI:456216"/>
        <dbReference type="EC" id="3.6.4.6"/>
    </reaction>
</comment>
<comment type="cofactor">
    <cofactor evidence="2">
        <name>Mg(2+)</name>
        <dbReference type="ChEBI" id="CHEBI:18420"/>
    </cofactor>
    <text evidence="2">Binds 1 Mg(2+) ion per subunit.</text>
</comment>
<comment type="subunit">
    <text evidence="1">Homohexamer.</text>
</comment>
<comment type="subcellular location">
    <subcellularLocation>
        <location>Cytoplasm</location>
    </subcellularLocation>
</comment>
<comment type="tissue specificity">
    <text>Nervous system.</text>
</comment>
<comment type="similarity">
    <text evidence="3">Belongs to the AAA ATPase family.</text>
</comment>
<organism>
    <name type="scientific">Drosophila melanogaster</name>
    <name type="common">Fruit fly</name>
    <dbReference type="NCBI Taxonomy" id="7227"/>
    <lineage>
        <taxon>Eukaryota</taxon>
        <taxon>Metazoa</taxon>
        <taxon>Ecdysozoa</taxon>
        <taxon>Arthropoda</taxon>
        <taxon>Hexapoda</taxon>
        <taxon>Insecta</taxon>
        <taxon>Pterygota</taxon>
        <taxon>Neoptera</taxon>
        <taxon>Endopterygota</taxon>
        <taxon>Diptera</taxon>
        <taxon>Brachycera</taxon>
        <taxon>Muscomorpha</taxon>
        <taxon>Ephydroidea</taxon>
        <taxon>Drosophilidae</taxon>
        <taxon>Drosophila</taxon>
        <taxon>Sophophora</taxon>
    </lineage>
</organism>
<feature type="chain" id="PRO_0000084566" description="Vesicle-fusing ATPase 1">
    <location>
        <begin position="1"/>
        <end position="745"/>
    </location>
</feature>
<feature type="binding site" evidence="2">
    <location>
        <begin position="505"/>
        <end position="510"/>
    </location>
    <ligand>
        <name>ATP</name>
        <dbReference type="ChEBI" id="CHEBI:30616"/>
    </ligand>
</feature>
<feature type="binding site" evidence="2">
    <location>
        <begin position="545"/>
        <end position="552"/>
    </location>
    <ligand>
        <name>ATP</name>
        <dbReference type="ChEBI" id="CHEBI:30616"/>
    </ligand>
</feature>
<feature type="binding site" evidence="2">
    <location>
        <position position="550"/>
    </location>
    <ligand>
        <name>Mg(2+)</name>
        <dbReference type="ChEBI" id="CHEBI:18420"/>
    </ligand>
</feature>
<reference key="1">
    <citation type="journal article" date="1994" name="Proc. Natl. Acad. Sci. U.S.A.">
        <title>Neurally expressed Drosophila genes encoding homologs of the NSF and SNAP secretory proteins.</title>
        <authorList>
            <person name="Ordway R.W."/>
            <person name="Pallanck L."/>
            <person name="Ganetzky B."/>
        </authorList>
    </citation>
    <scope>NUCLEOTIDE SEQUENCE [MRNA]</scope>
    <source>
        <tissue>Head</tissue>
    </source>
</reference>
<reference key="2">
    <citation type="journal article" date="2000" name="Science">
        <title>The genome sequence of Drosophila melanogaster.</title>
        <authorList>
            <person name="Adams M.D."/>
            <person name="Celniker S.E."/>
            <person name="Holt R.A."/>
            <person name="Evans C.A."/>
            <person name="Gocayne J.D."/>
            <person name="Amanatides P.G."/>
            <person name="Scherer S.E."/>
            <person name="Li P.W."/>
            <person name="Hoskins R.A."/>
            <person name="Galle R.F."/>
            <person name="George R.A."/>
            <person name="Lewis S.E."/>
            <person name="Richards S."/>
            <person name="Ashburner M."/>
            <person name="Henderson S.N."/>
            <person name="Sutton G.G."/>
            <person name="Wortman J.R."/>
            <person name="Yandell M.D."/>
            <person name="Zhang Q."/>
            <person name="Chen L.X."/>
            <person name="Brandon R.C."/>
            <person name="Rogers Y.-H.C."/>
            <person name="Blazej R.G."/>
            <person name="Champe M."/>
            <person name="Pfeiffer B.D."/>
            <person name="Wan K.H."/>
            <person name="Doyle C."/>
            <person name="Baxter E.G."/>
            <person name="Helt G."/>
            <person name="Nelson C.R."/>
            <person name="Miklos G.L.G."/>
            <person name="Abril J.F."/>
            <person name="Agbayani A."/>
            <person name="An H.-J."/>
            <person name="Andrews-Pfannkoch C."/>
            <person name="Baldwin D."/>
            <person name="Ballew R.M."/>
            <person name="Basu A."/>
            <person name="Baxendale J."/>
            <person name="Bayraktaroglu L."/>
            <person name="Beasley E.M."/>
            <person name="Beeson K.Y."/>
            <person name="Benos P.V."/>
            <person name="Berman B.P."/>
            <person name="Bhandari D."/>
            <person name="Bolshakov S."/>
            <person name="Borkova D."/>
            <person name="Botchan M.R."/>
            <person name="Bouck J."/>
            <person name="Brokstein P."/>
            <person name="Brottier P."/>
            <person name="Burtis K.C."/>
            <person name="Busam D.A."/>
            <person name="Butler H."/>
            <person name="Cadieu E."/>
            <person name="Center A."/>
            <person name="Chandra I."/>
            <person name="Cherry J.M."/>
            <person name="Cawley S."/>
            <person name="Dahlke C."/>
            <person name="Davenport L.B."/>
            <person name="Davies P."/>
            <person name="de Pablos B."/>
            <person name="Delcher A."/>
            <person name="Deng Z."/>
            <person name="Mays A.D."/>
            <person name="Dew I."/>
            <person name="Dietz S.M."/>
            <person name="Dodson K."/>
            <person name="Doup L.E."/>
            <person name="Downes M."/>
            <person name="Dugan-Rocha S."/>
            <person name="Dunkov B.C."/>
            <person name="Dunn P."/>
            <person name="Durbin K.J."/>
            <person name="Evangelista C.C."/>
            <person name="Ferraz C."/>
            <person name="Ferriera S."/>
            <person name="Fleischmann W."/>
            <person name="Fosler C."/>
            <person name="Gabrielian A.E."/>
            <person name="Garg N.S."/>
            <person name="Gelbart W.M."/>
            <person name="Glasser K."/>
            <person name="Glodek A."/>
            <person name="Gong F."/>
            <person name="Gorrell J.H."/>
            <person name="Gu Z."/>
            <person name="Guan P."/>
            <person name="Harris M."/>
            <person name="Harris N.L."/>
            <person name="Harvey D.A."/>
            <person name="Heiman T.J."/>
            <person name="Hernandez J.R."/>
            <person name="Houck J."/>
            <person name="Hostin D."/>
            <person name="Houston K.A."/>
            <person name="Howland T.J."/>
            <person name="Wei M.-H."/>
            <person name="Ibegwam C."/>
            <person name="Jalali M."/>
            <person name="Kalush F."/>
            <person name="Karpen G.H."/>
            <person name="Ke Z."/>
            <person name="Kennison J.A."/>
            <person name="Ketchum K.A."/>
            <person name="Kimmel B.E."/>
            <person name="Kodira C.D."/>
            <person name="Kraft C.L."/>
            <person name="Kravitz S."/>
            <person name="Kulp D."/>
            <person name="Lai Z."/>
            <person name="Lasko P."/>
            <person name="Lei Y."/>
            <person name="Levitsky A.A."/>
            <person name="Li J.H."/>
            <person name="Li Z."/>
            <person name="Liang Y."/>
            <person name="Lin X."/>
            <person name="Liu X."/>
            <person name="Mattei B."/>
            <person name="McIntosh T.C."/>
            <person name="McLeod M.P."/>
            <person name="McPherson D."/>
            <person name="Merkulov G."/>
            <person name="Milshina N.V."/>
            <person name="Mobarry C."/>
            <person name="Morris J."/>
            <person name="Moshrefi A."/>
            <person name="Mount S.M."/>
            <person name="Moy M."/>
            <person name="Murphy B."/>
            <person name="Murphy L."/>
            <person name="Muzny D.M."/>
            <person name="Nelson D.L."/>
            <person name="Nelson D.R."/>
            <person name="Nelson K.A."/>
            <person name="Nixon K."/>
            <person name="Nusskern D.R."/>
            <person name="Pacleb J.M."/>
            <person name="Palazzolo M."/>
            <person name="Pittman G.S."/>
            <person name="Pan S."/>
            <person name="Pollard J."/>
            <person name="Puri V."/>
            <person name="Reese M.G."/>
            <person name="Reinert K."/>
            <person name="Remington K."/>
            <person name="Saunders R.D.C."/>
            <person name="Scheeler F."/>
            <person name="Shen H."/>
            <person name="Shue B.C."/>
            <person name="Siden-Kiamos I."/>
            <person name="Simpson M."/>
            <person name="Skupski M.P."/>
            <person name="Smith T.J."/>
            <person name="Spier E."/>
            <person name="Spradling A.C."/>
            <person name="Stapleton M."/>
            <person name="Strong R."/>
            <person name="Sun E."/>
            <person name="Svirskas R."/>
            <person name="Tector C."/>
            <person name="Turner R."/>
            <person name="Venter E."/>
            <person name="Wang A.H."/>
            <person name="Wang X."/>
            <person name="Wang Z.-Y."/>
            <person name="Wassarman D.A."/>
            <person name="Weinstock G.M."/>
            <person name="Weissenbach J."/>
            <person name="Williams S.M."/>
            <person name="Woodage T."/>
            <person name="Worley K.C."/>
            <person name="Wu D."/>
            <person name="Yang S."/>
            <person name="Yao Q.A."/>
            <person name="Ye J."/>
            <person name="Yeh R.-F."/>
            <person name="Zaveri J.S."/>
            <person name="Zhan M."/>
            <person name="Zhang G."/>
            <person name="Zhao Q."/>
            <person name="Zheng L."/>
            <person name="Zheng X.H."/>
            <person name="Zhong F.N."/>
            <person name="Zhong W."/>
            <person name="Zhou X."/>
            <person name="Zhu S.C."/>
            <person name="Zhu X."/>
            <person name="Smith H.O."/>
            <person name="Gibbs R.A."/>
            <person name="Myers E.W."/>
            <person name="Rubin G.M."/>
            <person name="Venter J.C."/>
        </authorList>
    </citation>
    <scope>NUCLEOTIDE SEQUENCE [LARGE SCALE GENOMIC DNA]</scope>
    <source>
        <strain>Berkeley</strain>
    </source>
</reference>
<reference key="3">
    <citation type="journal article" date="2002" name="Genome Biol.">
        <title>Annotation of the Drosophila melanogaster euchromatic genome: a systematic review.</title>
        <authorList>
            <person name="Misra S."/>
            <person name="Crosby M.A."/>
            <person name="Mungall C.J."/>
            <person name="Matthews B.B."/>
            <person name="Campbell K.S."/>
            <person name="Hradecky P."/>
            <person name="Huang Y."/>
            <person name="Kaminker J.S."/>
            <person name="Millburn G.H."/>
            <person name="Prochnik S.E."/>
            <person name="Smith C.D."/>
            <person name="Tupy J.L."/>
            <person name="Whitfield E.J."/>
            <person name="Bayraktaroglu L."/>
            <person name="Berman B.P."/>
            <person name="Bettencourt B.R."/>
            <person name="Celniker S.E."/>
            <person name="de Grey A.D.N.J."/>
            <person name="Drysdale R.A."/>
            <person name="Harris N.L."/>
            <person name="Richter J."/>
            <person name="Russo S."/>
            <person name="Schroeder A.J."/>
            <person name="Shu S.Q."/>
            <person name="Stapleton M."/>
            <person name="Yamada C."/>
            <person name="Ashburner M."/>
            <person name="Gelbart W.M."/>
            <person name="Rubin G.M."/>
            <person name="Lewis S.E."/>
        </authorList>
    </citation>
    <scope>GENOME REANNOTATION</scope>
    <source>
        <strain>Berkeley</strain>
    </source>
</reference>
<reference key="4">
    <citation type="submission" date="2003-08" db="EMBL/GenBank/DDBJ databases">
        <authorList>
            <person name="Stapleton M."/>
            <person name="Brokstein P."/>
            <person name="Hong L."/>
            <person name="Agbayani A."/>
            <person name="Carlson J.W."/>
            <person name="Champe M."/>
            <person name="Chavez C."/>
            <person name="Dorsett V."/>
            <person name="Dresnek D."/>
            <person name="Farfan D."/>
            <person name="Frise E."/>
            <person name="George R.A."/>
            <person name="Gonzalez M."/>
            <person name="Guarin H."/>
            <person name="Kronmiller B."/>
            <person name="Li P.W."/>
            <person name="Liao G."/>
            <person name="Miranda A."/>
            <person name="Mungall C.J."/>
            <person name="Nunoo J."/>
            <person name="Pacleb J.M."/>
            <person name="Paragas V."/>
            <person name="Park S."/>
            <person name="Patel S."/>
            <person name="Phouanenavong S."/>
            <person name="Wan K.H."/>
            <person name="Yu C."/>
            <person name="Lewis S.E."/>
            <person name="Rubin G.M."/>
            <person name="Celniker S.E."/>
        </authorList>
    </citation>
    <scope>NUCLEOTIDE SEQUENCE [LARGE SCALE MRNA]</scope>
    <source>
        <strain>Berkeley</strain>
        <tissue>Embryo</tissue>
    </source>
</reference>
<dbReference type="EC" id="3.6.4.6"/>
<dbReference type="EMBL" id="U09373">
    <property type="protein sequence ID" value="AAA83413.1"/>
    <property type="molecule type" value="mRNA"/>
</dbReference>
<dbReference type="EMBL" id="AE014298">
    <property type="protein sequence ID" value="AAF48244.2"/>
    <property type="molecule type" value="Genomic_DNA"/>
</dbReference>
<dbReference type="EMBL" id="BT010259">
    <property type="protein sequence ID" value="AAQ23577.1"/>
    <property type="molecule type" value="mRNA"/>
</dbReference>
<dbReference type="RefSeq" id="NP_001259506.1">
    <property type="nucleotide sequence ID" value="NM_001272577.2"/>
</dbReference>
<dbReference type="RefSeq" id="NP_524877.1">
    <property type="nucleotide sequence ID" value="NM_080138.4"/>
</dbReference>
<dbReference type="SMR" id="P46461"/>
<dbReference type="BioGRID" id="70577">
    <property type="interactions" value="16"/>
</dbReference>
<dbReference type="DIP" id="DIP-20666N"/>
<dbReference type="FunCoup" id="P46461">
    <property type="interactions" value="1467"/>
</dbReference>
<dbReference type="IntAct" id="P46461">
    <property type="interactions" value="9"/>
</dbReference>
<dbReference type="STRING" id="7227.FBpp0073585"/>
<dbReference type="PaxDb" id="7227-FBpp0305521"/>
<dbReference type="DNASU" id="47091"/>
<dbReference type="EnsemblMetazoa" id="FBtr0073754">
    <property type="protein sequence ID" value="FBpp0073585"/>
    <property type="gene ID" value="FBgn0000346"/>
</dbReference>
<dbReference type="EnsemblMetazoa" id="FBtr0333329">
    <property type="protein sequence ID" value="FBpp0305521"/>
    <property type="gene ID" value="FBgn0000346"/>
</dbReference>
<dbReference type="GeneID" id="47091"/>
<dbReference type="KEGG" id="dme:Dmel_CG1618"/>
<dbReference type="AGR" id="FB:FBgn0000346"/>
<dbReference type="CTD" id="1312"/>
<dbReference type="FlyBase" id="FBgn0000346">
    <property type="gene designation" value="comt"/>
</dbReference>
<dbReference type="VEuPathDB" id="VectorBase:FBgn0000346"/>
<dbReference type="eggNOG" id="KOG0741">
    <property type="taxonomic scope" value="Eukaryota"/>
</dbReference>
<dbReference type="GeneTree" id="ENSGT00530000064085"/>
<dbReference type="HOGENOM" id="CLU_008037_2_0_1"/>
<dbReference type="InParanoid" id="P46461"/>
<dbReference type="OMA" id="VINWGTP"/>
<dbReference type="OrthoDB" id="9982946at2759"/>
<dbReference type="PhylomeDB" id="P46461"/>
<dbReference type="BRENDA" id="3.6.4.6">
    <property type="organism ID" value="1994"/>
</dbReference>
<dbReference type="Reactome" id="R-DME-204005">
    <property type="pathway name" value="COPII-mediated vesicle transport"/>
</dbReference>
<dbReference type="Reactome" id="R-DME-416993">
    <property type="pathway name" value="Trafficking of GluR2-containing AMPA receptors"/>
</dbReference>
<dbReference type="Reactome" id="R-DME-6807878">
    <property type="pathway name" value="COPI-mediated anterograde transport"/>
</dbReference>
<dbReference type="Reactome" id="R-DME-6811434">
    <property type="pathway name" value="COPI-dependent Golgi-to-ER retrograde traffic"/>
</dbReference>
<dbReference type="Reactome" id="R-DME-6811438">
    <property type="pathway name" value="Intra-Golgi traffic"/>
</dbReference>
<dbReference type="Reactome" id="R-DME-6811440">
    <property type="pathway name" value="Retrograde transport at the Trans-Golgi-Network"/>
</dbReference>
<dbReference type="SignaLink" id="P46461"/>
<dbReference type="BioGRID-ORCS" id="47091">
    <property type="hits" value="0 hits in 3 CRISPR screens"/>
</dbReference>
<dbReference type="ChiTaRS" id="comt">
    <property type="organism name" value="fly"/>
</dbReference>
<dbReference type="GenomeRNAi" id="47091"/>
<dbReference type="PRO" id="PR:P46461"/>
<dbReference type="Proteomes" id="UP000000803">
    <property type="component" value="Chromosome X"/>
</dbReference>
<dbReference type="Bgee" id="FBgn0000346">
    <property type="expression patterns" value="Expressed in second segment of antenna (Drosophila) and 134 other cell types or tissues"/>
</dbReference>
<dbReference type="ExpressionAtlas" id="P46461">
    <property type="expression patterns" value="baseline and differential"/>
</dbReference>
<dbReference type="GO" id="GO:0005737">
    <property type="term" value="C:cytoplasm"/>
    <property type="evidence" value="ECO:0000314"/>
    <property type="project" value="FlyBase"/>
</dbReference>
<dbReference type="GO" id="GO:0005795">
    <property type="term" value="C:Golgi stack"/>
    <property type="evidence" value="ECO:0000318"/>
    <property type="project" value="GO_Central"/>
</dbReference>
<dbReference type="GO" id="GO:0031594">
    <property type="term" value="C:neuromuscular junction"/>
    <property type="evidence" value="ECO:0000314"/>
    <property type="project" value="SynGO"/>
</dbReference>
<dbReference type="GO" id="GO:0098527">
    <property type="term" value="C:neuromuscular junction of somatic muscle"/>
    <property type="evidence" value="ECO:0000314"/>
    <property type="project" value="FlyBase"/>
</dbReference>
<dbReference type="GO" id="GO:0099523">
    <property type="term" value="C:presynaptic cytosol"/>
    <property type="evidence" value="ECO:0000314"/>
    <property type="project" value="SynGO"/>
</dbReference>
<dbReference type="GO" id="GO:0043195">
    <property type="term" value="C:terminal bouton"/>
    <property type="evidence" value="ECO:0000314"/>
    <property type="project" value="FlyBase"/>
</dbReference>
<dbReference type="GO" id="GO:0005524">
    <property type="term" value="F:ATP binding"/>
    <property type="evidence" value="ECO:0007669"/>
    <property type="project" value="UniProtKB-KW"/>
</dbReference>
<dbReference type="GO" id="GO:0016887">
    <property type="term" value="F:ATP hydrolysis activity"/>
    <property type="evidence" value="ECO:0000250"/>
    <property type="project" value="FlyBase"/>
</dbReference>
<dbReference type="GO" id="GO:0046872">
    <property type="term" value="F:metal ion binding"/>
    <property type="evidence" value="ECO:0007669"/>
    <property type="project" value="UniProtKB-KW"/>
</dbReference>
<dbReference type="GO" id="GO:0006914">
    <property type="term" value="P:autophagy"/>
    <property type="evidence" value="ECO:0000315"/>
    <property type="project" value="FlyBase"/>
</dbReference>
<dbReference type="GO" id="GO:0007030">
    <property type="term" value="P:Golgi organization"/>
    <property type="evidence" value="ECO:0000315"/>
    <property type="project" value="FlyBase"/>
</dbReference>
<dbReference type="GO" id="GO:0090160">
    <property type="term" value="P:Golgi to lysosome transport"/>
    <property type="evidence" value="ECO:0000315"/>
    <property type="project" value="FlyBase"/>
</dbReference>
<dbReference type="GO" id="GO:0043001">
    <property type="term" value="P:Golgi to plasma membrane protein transport"/>
    <property type="evidence" value="ECO:0000318"/>
    <property type="project" value="GO_Central"/>
</dbReference>
<dbReference type="GO" id="GO:0006891">
    <property type="term" value="P:intra-Golgi vesicle-mediated transport"/>
    <property type="evidence" value="ECO:0000318"/>
    <property type="project" value="GO_Central"/>
</dbReference>
<dbReference type="GO" id="GO:0007274">
    <property type="term" value="P:neuromuscular synaptic transmission"/>
    <property type="evidence" value="ECO:0000270"/>
    <property type="project" value="FlyBase"/>
</dbReference>
<dbReference type="GO" id="GO:0070050">
    <property type="term" value="P:neuron cellular homeostasis"/>
    <property type="evidence" value="ECO:0000315"/>
    <property type="project" value="FlyBase"/>
</dbReference>
<dbReference type="GO" id="GO:0007269">
    <property type="term" value="P:neurotransmitter secretion"/>
    <property type="evidence" value="ECO:0000303"/>
    <property type="project" value="FlyBase"/>
</dbReference>
<dbReference type="GO" id="GO:1900073">
    <property type="term" value="P:regulation of neuromuscular synaptic transmission"/>
    <property type="evidence" value="ECO:0000316"/>
    <property type="project" value="FlyBase"/>
</dbReference>
<dbReference type="GO" id="GO:0048172">
    <property type="term" value="P:regulation of short-term neuronal synaptic plasticity"/>
    <property type="evidence" value="ECO:0000314"/>
    <property type="project" value="FlyBase"/>
</dbReference>
<dbReference type="GO" id="GO:0035494">
    <property type="term" value="P:SNARE complex disassembly"/>
    <property type="evidence" value="ECO:0000314"/>
    <property type="project" value="FlyBase"/>
</dbReference>
<dbReference type="GO" id="GO:0099504">
    <property type="term" value="P:synaptic vesicle cycle"/>
    <property type="evidence" value="ECO:0000314"/>
    <property type="project" value="SynGO"/>
</dbReference>
<dbReference type="GO" id="GO:0031629">
    <property type="term" value="P:synaptic vesicle fusion to presynaptic active zone membrane"/>
    <property type="evidence" value="ECO:0000315"/>
    <property type="project" value="FlyBase"/>
</dbReference>
<dbReference type="GO" id="GO:0016082">
    <property type="term" value="P:synaptic vesicle priming"/>
    <property type="evidence" value="ECO:0000303"/>
    <property type="project" value="FlyBase"/>
</dbReference>
<dbReference type="CDD" id="cd19504">
    <property type="entry name" value="RecA-like_NSF-SEC18_r1-like"/>
    <property type="match status" value="1"/>
</dbReference>
<dbReference type="FunFam" id="3.10.330.10:FF:000010">
    <property type="entry name" value="vesicle-fusing ATPase 2"/>
    <property type="match status" value="1"/>
</dbReference>
<dbReference type="FunFam" id="1.10.8.60:FF:000026">
    <property type="entry name" value="vesicle-fusing ATPase isoform X1"/>
    <property type="match status" value="1"/>
</dbReference>
<dbReference type="FunFam" id="1.10.8.60:FF:000031">
    <property type="entry name" value="vesicle-fusing ATPase isoform X1"/>
    <property type="match status" value="1"/>
</dbReference>
<dbReference type="FunFam" id="3.40.50.300:FF:000166">
    <property type="entry name" value="vesicle-fusing ATPase isoform X1"/>
    <property type="match status" value="1"/>
</dbReference>
<dbReference type="FunFam" id="2.40.40.20:FF:000012">
    <property type="entry name" value="Vesicle-fusing ATPase protein"/>
    <property type="match status" value="1"/>
</dbReference>
<dbReference type="FunFam" id="3.40.50.300:FF:000187">
    <property type="entry name" value="Vesicular-fusion ATPase SEC18"/>
    <property type="match status" value="1"/>
</dbReference>
<dbReference type="Gene3D" id="1.10.8.60">
    <property type="match status" value="2"/>
</dbReference>
<dbReference type="Gene3D" id="2.40.40.20">
    <property type="match status" value="1"/>
</dbReference>
<dbReference type="Gene3D" id="3.10.330.10">
    <property type="match status" value="1"/>
</dbReference>
<dbReference type="Gene3D" id="3.40.50.300">
    <property type="entry name" value="P-loop containing nucleotide triphosphate hydrolases"/>
    <property type="match status" value="2"/>
</dbReference>
<dbReference type="InterPro" id="IPR003593">
    <property type="entry name" value="AAA+_ATPase"/>
</dbReference>
<dbReference type="InterPro" id="IPR041569">
    <property type="entry name" value="AAA_lid_3"/>
</dbReference>
<dbReference type="InterPro" id="IPR009010">
    <property type="entry name" value="Asp_de-COase-like_dom_sf"/>
</dbReference>
<dbReference type="InterPro" id="IPR003959">
    <property type="entry name" value="ATPase_AAA_core"/>
</dbReference>
<dbReference type="InterPro" id="IPR003960">
    <property type="entry name" value="ATPase_AAA_CS"/>
</dbReference>
<dbReference type="InterPro" id="IPR004201">
    <property type="entry name" value="Cdc48_dom2"/>
</dbReference>
<dbReference type="InterPro" id="IPR029067">
    <property type="entry name" value="CDC48_domain_2-like_sf"/>
</dbReference>
<dbReference type="InterPro" id="IPR003338">
    <property type="entry name" value="CDC4_N-term_subdom"/>
</dbReference>
<dbReference type="InterPro" id="IPR054419">
    <property type="entry name" value="NSF_ATPase_lid"/>
</dbReference>
<dbReference type="InterPro" id="IPR027417">
    <property type="entry name" value="P-loop_NTPase"/>
</dbReference>
<dbReference type="InterPro" id="IPR039812">
    <property type="entry name" value="Vesicle-fus_ATPase"/>
</dbReference>
<dbReference type="PANTHER" id="PTHR23078:SF3">
    <property type="entry name" value="VESICLE-FUSING ATPASE"/>
    <property type="match status" value="1"/>
</dbReference>
<dbReference type="PANTHER" id="PTHR23078">
    <property type="entry name" value="VESICULAR-FUSION PROTEIN NSF"/>
    <property type="match status" value="1"/>
</dbReference>
<dbReference type="Pfam" id="PF00004">
    <property type="entry name" value="AAA"/>
    <property type="match status" value="2"/>
</dbReference>
<dbReference type="Pfam" id="PF17862">
    <property type="entry name" value="AAA_lid_3"/>
    <property type="match status" value="1"/>
</dbReference>
<dbReference type="Pfam" id="PF02359">
    <property type="entry name" value="CDC48_N"/>
    <property type="match status" value="1"/>
</dbReference>
<dbReference type="Pfam" id="PF21964">
    <property type="entry name" value="NSF_ATPase_lid"/>
    <property type="match status" value="1"/>
</dbReference>
<dbReference type="SMART" id="SM00382">
    <property type="entry name" value="AAA"/>
    <property type="match status" value="2"/>
</dbReference>
<dbReference type="SMART" id="SM01072">
    <property type="entry name" value="CDC48_2"/>
    <property type="match status" value="1"/>
</dbReference>
<dbReference type="SMART" id="SM01073">
    <property type="entry name" value="CDC48_N"/>
    <property type="match status" value="1"/>
</dbReference>
<dbReference type="SUPFAM" id="SSF50692">
    <property type="entry name" value="ADC-like"/>
    <property type="match status" value="1"/>
</dbReference>
<dbReference type="SUPFAM" id="SSF54585">
    <property type="entry name" value="Cdc48 domain 2-like"/>
    <property type="match status" value="1"/>
</dbReference>
<dbReference type="SUPFAM" id="SSF52540">
    <property type="entry name" value="P-loop containing nucleoside triphosphate hydrolases"/>
    <property type="match status" value="2"/>
</dbReference>
<dbReference type="PROSITE" id="PS00674">
    <property type="entry name" value="AAA"/>
    <property type="match status" value="1"/>
</dbReference>
<keyword id="KW-0067">ATP-binding</keyword>
<keyword id="KW-0963">Cytoplasm</keyword>
<keyword id="KW-0931">ER-Golgi transport</keyword>
<keyword id="KW-0378">Hydrolase</keyword>
<keyword id="KW-0460">Magnesium</keyword>
<keyword id="KW-0479">Metal-binding</keyword>
<keyword id="KW-0547">Nucleotide-binding</keyword>
<keyword id="KW-0653">Protein transport</keyword>
<keyword id="KW-1185">Reference proteome</keyword>
<keyword id="KW-0677">Repeat</keyword>
<keyword id="KW-0813">Transport</keyword>